<accession>Q9KT81</accession>
<proteinExistence type="inferred from homology"/>
<name>MOAA_VIBCH</name>
<comment type="function">
    <text evidence="1">Catalyzes the cyclization of GTP to (8S)-3',8-cyclo-7,8-dihydroguanosine 5'-triphosphate.</text>
</comment>
<comment type="catalytic activity">
    <reaction evidence="1">
        <text>GTP + AH2 + S-adenosyl-L-methionine = (8S)-3',8-cyclo-7,8-dihydroguanosine 5'-triphosphate + 5'-deoxyadenosine + L-methionine + A + H(+)</text>
        <dbReference type="Rhea" id="RHEA:49576"/>
        <dbReference type="ChEBI" id="CHEBI:13193"/>
        <dbReference type="ChEBI" id="CHEBI:15378"/>
        <dbReference type="ChEBI" id="CHEBI:17319"/>
        <dbReference type="ChEBI" id="CHEBI:17499"/>
        <dbReference type="ChEBI" id="CHEBI:37565"/>
        <dbReference type="ChEBI" id="CHEBI:57844"/>
        <dbReference type="ChEBI" id="CHEBI:59789"/>
        <dbReference type="ChEBI" id="CHEBI:131766"/>
        <dbReference type="EC" id="4.1.99.22"/>
    </reaction>
</comment>
<comment type="cofactor">
    <cofactor evidence="1">
        <name>[4Fe-4S] cluster</name>
        <dbReference type="ChEBI" id="CHEBI:49883"/>
    </cofactor>
    <text evidence="1">Binds 2 [4Fe-4S] clusters. Binds 1 [4Fe-4S] cluster coordinated with 3 cysteines and an exchangeable S-adenosyl-L-methionine and 1 [4Fe-4S] cluster coordinated with 3 cysteines and the GTP-derived substrate.</text>
</comment>
<comment type="pathway">
    <text evidence="1">Cofactor biosynthesis; molybdopterin biosynthesis.</text>
</comment>
<comment type="subunit">
    <text evidence="1">Monomer and homodimer.</text>
</comment>
<comment type="similarity">
    <text evidence="1">Belongs to the radical SAM superfamily. MoaA family.</text>
</comment>
<feature type="chain" id="PRO_0000153006" description="GTP 3',8-cyclase">
    <location>
        <begin position="1"/>
        <end position="334"/>
    </location>
</feature>
<feature type="domain" description="Radical SAM core" evidence="2">
    <location>
        <begin position="13"/>
        <end position="239"/>
    </location>
</feature>
<feature type="binding site" evidence="1">
    <location>
        <position position="22"/>
    </location>
    <ligand>
        <name>GTP</name>
        <dbReference type="ChEBI" id="CHEBI:37565"/>
    </ligand>
</feature>
<feature type="binding site" evidence="1">
    <location>
        <position position="29"/>
    </location>
    <ligand>
        <name>[4Fe-4S] cluster</name>
        <dbReference type="ChEBI" id="CHEBI:49883"/>
        <label>1</label>
        <note>4Fe-4S-S-AdoMet</note>
    </ligand>
</feature>
<feature type="binding site" evidence="1">
    <location>
        <position position="33"/>
    </location>
    <ligand>
        <name>[4Fe-4S] cluster</name>
        <dbReference type="ChEBI" id="CHEBI:49883"/>
        <label>1</label>
        <note>4Fe-4S-S-AdoMet</note>
    </ligand>
</feature>
<feature type="binding site" evidence="1">
    <location>
        <position position="35"/>
    </location>
    <ligand>
        <name>S-adenosyl-L-methionine</name>
        <dbReference type="ChEBI" id="CHEBI:59789"/>
    </ligand>
</feature>
<feature type="binding site" evidence="1">
    <location>
        <position position="36"/>
    </location>
    <ligand>
        <name>[4Fe-4S] cluster</name>
        <dbReference type="ChEBI" id="CHEBI:49883"/>
        <label>1</label>
        <note>4Fe-4S-S-AdoMet</note>
    </ligand>
</feature>
<feature type="binding site" evidence="1">
    <location>
        <position position="73"/>
    </location>
    <ligand>
        <name>GTP</name>
        <dbReference type="ChEBI" id="CHEBI:37565"/>
    </ligand>
</feature>
<feature type="binding site" evidence="1">
    <location>
        <position position="77"/>
    </location>
    <ligand>
        <name>S-adenosyl-L-methionine</name>
        <dbReference type="ChEBI" id="CHEBI:59789"/>
    </ligand>
</feature>
<feature type="binding site" evidence="1">
    <location>
        <position position="104"/>
    </location>
    <ligand>
        <name>GTP</name>
        <dbReference type="ChEBI" id="CHEBI:37565"/>
    </ligand>
</feature>
<feature type="binding site" evidence="1">
    <location>
        <position position="128"/>
    </location>
    <ligand>
        <name>S-adenosyl-L-methionine</name>
        <dbReference type="ChEBI" id="CHEBI:59789"/>
    </ligand>
</feature>
<feature type="binding site" evidence="1">
    <location>
        <position position="165"/>
    </location>
    <ligand>
        <name>GTP</name>
        <dbReference type="ChEBI" id="CHEBI:37565"/>
    </ligand>
</feature>
<feature type="binding site" evidence="1">
    <location>
        <position position="199"/>
    </location>
    <ligand>
        <name>S-adenosyl-L-methionine</name>
        <dbReference type="ChEBI" id="CHEBI:59789"/>
    </ligand>
</feature>
<feature type="binding site" evidence="1">
    <location>
        <position position="262"/>
    </location>
    <ligand>
        <name>[4Fe-4S] cluster</name>
        <dbReference type="ChEBI" id="CHEBI:49883"/>
        <label>2</label>
        <note>4Fe-4S-substrate</note>
    </ligand>
</feature>
<feature type="binding site" evidence="1">
    <location>
        <position position="265"/>
    </location>
    <ligand>
        <name>[4Fe-4S] cluster</name>
        <dbReference type="ChEBI" id="CHEBI:49883"/>
        <label>2</label>
        <note>4Fe-4S-substrate</note>
    </ligand>
</feature>
<feature type="binding site" evidence="1">
    <location>
        <begin position="267"/>
        <end position="269"/>
    </location>
    <ligand>
        <name>GTP</name>
        <dbReference type="ChEBI" id="CHEBI:37565"/>
    </ligand>
</feature>
<feature type="binding site" evidence="1">
    <location>
        <position position="279"/>
    </location>
    <ligand>
        <name>[4Fe-4S] cluster</name>
        <dbReference type="ChEBI" id="CHEBI:49883"/>
        <label>2</label>
        <note>4Fe-4S-substrate</note>
    </ligand>
</feature>
<gene>
    <name evidence="1" type="primary">moaA</name>
    <name type="ordered locus">VC_1024</name>
</gene>
<organism>
    <name type="scientific">Vibrio cholerae serotype O1 (strain ATCC 39315 / El Tor Inaba N16961)</name>
    <dbReference type="NCBI Taxonomy" id="243277"/>
    <lineage>
        <taxon>Bacteria</taxon>
        <taxon>Pseudomonadati</taxon>
        <taxon>Pseudomonadota</taxon>
        <taxon>Gammaproteobacteria</taxon>
        <taxon>Vibrionales</taxon>
        <taxon>Vibrionaceae</taxon>
        <taxon>Vibrio</taxon>
    </lineage>
</organism>
<dbReference type="EC" id="4.1.99.22" evidence="1"/>
<dbReference type="EMBL" id="AE003852">
    <property type="protein sequence ID" value="AAF94183.1"/>
    <property type="molecule type" value="Genomic_DNA"/>
</dbReference>
<dbReference type="PIR" id="F82250">
    <property type="entry name" value="F82250"/>
</dbReference>
<dbReference type="RefSeq" id="NP_230669.1">
    <property type="nucleotide sequence ID" value="NC_002505.1"/>
</dbReference>
<dbReference type="SMR" id="Q9KT81"/>
<dbReference type="STRING" id="243277.VC_1024"/>
<dbReference type="DNASU" id="2614294"/>
<dbReference type="EnsemblBacteria" id="AAF94183">
    <property type="protein sequence ID" value="AAF94183"/>
    <property type="gene ID" value="VC_1024"/>
</dbReference>
<dbReference type="KEGG" id="vch:VC_1024"/>
<dbReference type="PATRIC" id="fig|243277.26.peg.978"/>
<dbReference type="eggNOG" id="COG2896">
    <property type="taxonomic scope" value="Bacteria"/>
</dbReference>
<dbReference type="HOGENOM" id="CLU_009273_0_1_6"/>
<dbReference type="UniPathway" id="UPA00344"/>
<dbReference type="Proteomes" id="UP000000584">
    <property type="component" value="Chromosome 1"/>
</dbReference>
<dbReference type="GO" id="GO:0051539">
    <property type="term" value="F:4 iron, 4 sulfur cluster binding"/>
    <property type="evidence" value="ECO:0007669"/>
    <property type="project" value="UniProtKB-UniRule"/>
</dbReference>
<dbReference type="GO" id="GO:0061799">
    <property type="term" value="F:cyclic pyranopterin monophosphate synthase activity"/>
    <property type="evidence" value="ECO:0000318"/>
    <property type="project" value="GO_Central"/>
</dbReference>
<dbReference type="GO" id="GO:0061798">
    <property type="term" value="F:GTP 3',8'-cyclase activity"/>
    <property type="evidence" value="ECO:0000318"/>
    <property type="project" value="GO_Central"/>
</dbReference>
<dbReference type="GO" id="GO:0005525">
    <property type="term" value="F:GTP binding"/>
    <property type="evidence" value="ECO:0007669"/>
    <property type="project" value="UniProtKB-UniRule"/>
</dbReference>
<dbReference type="GO" id="GO:0046872">
    <property type="term" value="F:metal ion binding"/>
    <property type="evidence" value="ECO:0007669"/>
    <property type="project" value="UniProtKB-KW"/>
</dbReference>
<dbReference type="GO" id="GO:1904047">
    <property type="term" value="F:S-adenosyl-L-methionine binding"/>
    <property type="evidence" value="ECO:0007669"/>
    <property type="project" value="UniProtKB-UniRule"/>
</dbReference>
<dbReference type="GO" id="GO:0006777">
    <property type="term" value="P:Mo-molybdopterin cofactor biosynthetic process"/>
    <property type="evidence" value="ECO:0000318"/>
    <property type="project" value="GO_Central"/>
</dbReference>
<dbReference type="CDD" id="cd01335">
    <property type="entry name" value="Radical_SAM"/>
    <property type="match status" value="1"/>
</dbReference>
<dbReference type="CDD" id="cd21117">
    <property type="entry name" value="Twitch_MoaA"/>
    <property type="match status" value="1"/>
</dbReference>
<dbReference type="FunFam" id="3.20.20.70:FF:000057">
    <property type="entry name" value="GTP 3',8-cyclase"/>
    <property type="match status" value="1"/>
</dbReference>
<dbReference type="Gene3D" id="3.20.20.70">
    <property type="entry name" value="Aldolase class I"/>
    <property type="match status" value="1"/>
</dbReference>
<dbReference type="HAMAP" id="MF_01225_B">
    <property type="entry name" value="MoaA_B"/>
    <property type="match status" value="1"/>
</dbReference>
<dbReference type="InterPro" id="IPR013785">
    <property type="entry name" value="Aldolase_TIM"/>
</dbReference>
<dbReference type="InterPro" id="IPR006638">
    <property type="entry name" value="Elp3/MiaA/NifB-like_rSAM"/>
</dbReference>
<dbReference type="InterPro" id="IPR013483">
    <property type="entry name" value="MoaA"/>
</dbReference>
<dbReference type="InterPro" id="IPR010505">
    <property type="entry name" value="MoaA_twitch"/>
</dbReference>
<dbReference type="InterPro" id="IPR050105">
    <property type="entry name" value="MoCo_biosynth_MoaA/MoaC"/>
</dbReference>
<dbReference type="InterPro" id="IPR007197">
    <property type="entry name" value="rSAM"/>
</dbReference>
<dbReference type="NCBIfam" id="TIGR02666">
    <property type="entry name" value="moaA"/>
    <property type="match status" value="1"/>
</dbReference>
<dbReference type="PANTHER" id="PTHR22960:SF28">
    <property type="entry name" value="GTP 3',8-CYCLASE"/>
    <property type="match status" value="1"/>
</dbReference>
<dbReference type="PANTHER" id="PTHR22960">
    <property type="entry name" value="MOLYBDOPTERIN COFACTOR SYNTHESIS PROTEIN A"/>
    <property type="match status" value="1"/>
</dbReference>
<dbReference type="Pfam" id="PF13353">
    <property type="entry name" value="Fer4_12"/>
    <property type="match status" value="1"/>
</dbReference>
<dbReference type="Pfam" id="PF06463">
    <property type="entry name" value="Mob_synth_C"/>
    <property type="match status" value="1"/>
</dbReference>
<dbReference type="Pfam" id="PF04055">
    <property type="entry name" value="Radical_SAM"/>
    <property type="match status" value="1"/>
</dbReference>
<dbReference type="SFLD" id="SFLDG01383">
    <property type="entry name" value="cyclic_pyranopterin_phosphate"/>
    <property type="match status" value="1"/>
</dbReference>
<dbReference type="SFLD" id="SFLDS00029">
    <property type="entry name" value="Radical_SAM"/>
    <property type="match status" value="1"/>
</dbReference>
<dbReference type="SMART" id="SM00729">
    <property type="entry name" value="Elp3"/>
    <property type="match status" value="1"/>
</dbReference>
<dbReference type="SUPFAM" id="SSF102114">
    <property type="entry name" value="Radical SAM enzymes"/>
    <property type="match status" value="1"/>
</dbReference>
<dbReference type="PROSITE" id="PS51918">
    <property type="entry name" value="RADICAL_SAM"/>
    <property type="match status" value="1"/>
</dbReference>
<evidence type="ECO:0000255" key="1">
    <source>
        <dbReference type="HAMAP-Rule" id="MF_01225"/>
    </source>
</evidence>
<evidence type="ECO:0000255" key="2">
    <source>
        <dbReference type="PROSITE-ProRule" id="PRU01266"/>
    </source>
</evidence>
<protein>
    <recommendedName>
        <fullName evidence="1">GTP 3',8-cyclase</fullName>
        <ecNumber evidence="1">4.1.99.22</ecNumber>
    </recommendedName>
    <alternativeName>
        <fullName evidence="1">Molybdenum cofactor biosynthesis protein A</fullName>
    </alternativeName>
</protein>
<reference key="1">
    <citation type="journal article" date="2000" name="Nature">
        <title>DNA sequence of both chromosomes of the cholera pathogen Vibrio cholerae.</title>
        <authorList>
            <person name="Heidelberg J.F."/>
            <person name="Eisen J.A."/>
            <person name="Nelson W.C."/>
            <person name="Clayton R.A."/>
            <person name="Gwinn M.L."/>
            <person name="Dodson R.J."/>
            <person name="Haft D.H."/>
            <person name="Hickey E.K."/>
            <person name="Peterson J.D."/>
            <person name="Umayam L.A."/>
            <person name="Gill S.R."/>
            <person name="Nelson K.E."/>
            <person name="Read T.D."/>
            <person name="Tettelin H."/>
            <person name="Richardson D.L."/>
            <person name="Ermolaeva M.D."/>
            <person name="Vamathevan J.J."/>
            <person name="Bass S."/>
            <person name="Qin H."/>
            <person name="Dragoi I."/>
            <person name="Sellers P."/>
            <person name="McDonald L.A."/>
            <person name="Utterback T.R."/>
            <person name="Fleischmann R.D."/>
            <person name="Nierman W.C."/>
            <person name="White O."/>
            <person name="Salzberg S.L."/>
            <person name="Smith H.O."/>
            <person name="Colwell R.R."/>
            <person name="Mekalanos J.J."/>
            <person name="Venter J.C."/>
            <person name="Fraser C.M."/>
        </authorList>
    </citation>
    <scope>NUCLEOTIDE SEQUENCE [LARGE SCALE GENOMIC DNA]</scope>
    <source>
        <strain>ATCC 39315 / El Tor Inaba N16961</strain>
    </source>
</reference>
<sequence length="334" mass="37857">MERCSVAQQFEDRFQRKFYYLRLSITDVCNFKCTYCLPDGYKPSAGRPASFLTVNEIRRVVSAFAHCGTSKVRITGGEPSLRKDFGEIIHTIAQTPGIQKVATTTNGYRLAKHIGEWREAGLTQLNVSVDSLDPRMFAQITGENRFQQVMSGIDRAFEVGFEQVKVNVVLMKNLNHLELPQFMAWIKTRPIQLRFIELMQTGEMDALFARHHVSGISIRDYLFGNGWLLKARADNDGPAQVFIHPDFQGEIGLIMPYEKDFCRSCNRLRVSALGKLHLCLFGEQGIELRDLLQDDHQENALIERIQTQLQNKAETHFLHDGNSGVTPHLASIGG</sequence>
<keyword id="KW-0004">4Fe-4S</keyword>
<keyword id="KW-0342">GTP-binding</keyword>
<keyword id="KW-0408">Iron</keyword>
<keyword id="KW-0411">Iron-sulfur</keyword>
<keyword id="KW-0456">Lyase</keyword>
<keyword id="KW-0479">Metal-binding</keyword>
<keyword id="KW-0501">Molybdenum cofactor biosynthesis</keyword>
<keyword id="KW-0547">Nucleotide-binding</keyword>
<keyword id="KW-1185">Reference proteome</keyword>
<keyword id="KW-0949">S-adenosyl-L-methionine</keyword>